<feature type="chain" id="PRO_1000056171" description="Bifunctional protein GlmU">
    <location>
        <begin position="1"/>
        <end position="461"/>
    </location>
</feature>
<feature type="region of interest" description="Pyrophosphorylase" evidence="1">
    <location>
        <begin position="1"/>
        <end position="232"/>
    </location>
</feature>
<feature type="region of interest" description="Linker" evidence="1">
    <location>
        <begin position="233"/>
        <end position="253"/>
    </location>
</feature>
<feature type="region of interest" description="N-acetyltransferase" evidence="1">
    <location>
        <begin position="254"/>
        <end position="461"/>
    </location>
</feature>
<feature type="active site" description="Proton acceptor" evidence="1">
    <location>
        <position position="366"/>
    </location>
</feature>
<feature type="binding site" evidence="1">
    <location>
        <begin position="8"/>
        <end position="11"/>
    </location>
    <ligand>
        <name>UDP-N-acetyl-alpha-D-glucosamine</name>
        <dbReference type="ChEBI" id="CHEBI:57705"/>
    </ligand>
</feature>
<feature type="binding site" evidence="1">
    <location>
        <position position="22"/>
    </location>
    <ligand>
        <name>UDP-N-acetyl-alpha-D-glucosamine</name>
        <dbReference type="ChEBI" id="CHEBI:57705"/>
    </ligand>
</feature>
<feature type="binding site" evidence="1">
    <location>
        <position position="73"/>
    </location>
    <ligand>
        <name>UDP-N-acetyl-alpha-D-glucosamine</name>
        <dbReference type="ChEBI" id="CHEBI:57705"/>
    </ligand>
</feature>
<feature type="binding site" evidence="1">
    <location>
        <begin position="78"/>
        <end position="79"/>
    </location>
    <ligand>
        <name>UDP-N-acetyl-alpha-D-glucosamine</name>
        <dbReference type="ChEBI" id="CHEBI:57705"/>
    </ligand>
</feature>
<feature type="binding site" evidence="1">
    <location>
        <position position="102"/>
    </location>
    <ligand>
        <name>Mg(2+)</name>
        <dbReference type="ChEBI" id="CHEBI:18420"/>
    </ligand>
</feature>
<feature type="binding site" evidence="1">
    <location>
        <position position="142"/>
    </location>
    <ligand>
        <name>UDP-N-acetyl-alpha-D-glucosamine</name>
        <dbReference type="ChEBI" id="CHEBI:57705"/>
    </ligand>
</feature>
<feature type="binding site" evidence="1">
    <location>
        <position position="157"/>
    </location>
    <ligand>
        <name>UDP-N-acetyl-alpha-D-glucosamine</name>
        <dbReference type="ChEBI" id="CHEBI:57705"/>
    </ligand>
</feature>
<feature type="binding site" evidence="1">
    <location>
        <position position="230"/>
    </location>
    <ligand>
        <name>Mg(2+)</name>
        <dbReference type="ChEBI" id="CHEBI:18420"/>
    </ligand>
</feature>
<feature type="binding site" evidence="1">
    <location>
        <position position="230"/>
    </location>
    <ligand>
        <name>UDP-N-acetyl-alpha-D-glucosamine</name>
        <dbReference type="ChEBI" id="CHEBI:57705"/>
    </ligand>
</feature>
<feature type="binding site" evidence="1">
    <location>
        <position position="336"/>
    </location>
    <ligand>
        <name>UDP-N-acetyl-alpha-D-glucosamine</name>
        <dbReference type="ChEBI" id="CHEBI:57705"/>
    </ligand>
</feature>
<feature type="binding site" evidence="1">
    <location>
        <position position="354"/>
    </location>
    <ligand>
        <name>UDP-N-acetyl-alpha-D-glucosamine</name>
        <dbReference type="ChEBI" id="CHEBI:57705"/>
    </ligand>
</feature>
<feature type="binding site" evidence="1">
    <location>
        <position position="369"/>
    </location>
    <ligand>
        <name>UDP-N-acetyl-alpha-D-glucosamine</name>
        <dbReference type="ChEBI" id="CHEBI:57705"/>
    </ligand>
</feature>
<feature type="binding site" evidence="1">
    <location>
        <position position="380"/>
    </location>
    <ligand>
        <name>UDP-N-acetyl-alpha-D-glucosamine</name>
        <dbReference type="ChEBI" id="CHEBI:57705"/>
    </ligand>
</feature>
<feature type="binding site" evidence="1">
    <location>
        <position position="383"/>
    </location>
    <ligand>
        <name>acetyl-CoA</name>
        <dbReference type="ChEBI" id="CHEBI:57288"/>
    </ligand>
</feature>
<feature type="binding site" evidence="1">
    <location>
        <begin position="389"/>
        <end position="390"/>
    </location>
    <ligand>
        <name>acetyl-CoA</name>
        <dbReference type="ChEBI" id="CHEBI:57288"/>
    </ligand>
</feature>
<feature type="binding site" evidence="1">
    <location>
        <position position="408"/>
    </location>
    <ligand>
        <name>acetyl-CoA</name>
        <dbReference type="ChEBI" id="CHEBI:57288"/>
    </ligand>
</feature>
<feature type="binding site" evidence="1">
    <location>
        <position position="426"/>
    </location>
    <ligand>
        <name>acetyl-CoA</name>
        <dbReference type="ChEBI" id="CHEBI:57288"/>
    </ligand>
</feature>
<reference key="1">
    <citation type="submission" date="2006-11" db="EMBL/GenBank/DDBJ databases">
        <title>Identification and characterization of a new conjugation/ type IVA secretion system (trb/tra) of L. pneumophila Corby localized on a mobile genomic island.</title>
        <authorList>
            <person name="Gloeckner G."/>
            <person name="Albert-Weissenberger C."/>
            <person name="Weinmann E."/>
            <person name="Jacobi S."/>
            <person name="Schunder E."/>
            <person name="Steinert M."/>
            <person name="Buchrieser C."/>
            <person name="Hacker J."/>
            <person name="Heuner K."/>
        </authorList>
    </citation>
    <scope>NUCLEOTIDE SEQUENCE [LARGE SCALE GENOMIC DNA]</scope>
    <source>
        <strain>Corby</strain>
    </source>
</reference>
<comment type="function">
    <text evidence="1">Catalyzes the last two sequential reactions in the de novo biosynthetic pathway for UDP-N-acetylglucosamine (UDP-GlcNAc). The C-terminal domain catalyzes the transfer of acetyl group from acetyl coenzyme A to glucosamine-1-phosphate (GlcN-1-P) to produce N-acetylglucosamine-1-phosphate (GlcNAc-1-P), which is converted into UDP-GlcNAc by the transfer of uridine 5-monophosphate (from uridine 5-triphosphate), a reaction catalyzed by the N-terminal domain.</text>
</comment>
<comment type="catalytic activity">
    <reaction evidence="1">
        <text>alpha-D-glucosamine 1-phosphate + acetyl-CoA = N-acetyl-alpha-D-glucosamine 1-phosphate + CoA + H(+)</text>
        <dbReference type="Rhea" id="RHEA:13725"/>
        <dbReference type="ChEBI" id="CHEBI:15378"/>
        <dbReference type="ChEBI" id="CHEBI:57287"/>
        <dbReference type="ChEBI" id="CHEBI:57288"/>
        <dbReference type="ChEBI" id="CHEBI:57776"/>
        <dbReference type="ChEBI" id="CHEBI:58516"/>
        <dbReference type="EC" id="2.3.1.157"/>
    </reaction>
</comment>
<comment type="catalytic activity">
    <reaction evidence="1">
        <text>N-acetyl-alpha-D-glucosamine 1-phosphate + UTP + H(+) = UDP-N-acetyl-alpha-D-glucosamine + diphosphate</text>
        <dbReference type="Rhea" id="RHEA:13509"/>
        <dbReference type="ChEBI" id="CHEBI:15378"/>
        <dbReference type="ChEBI" id="CHEBI:33019"/>
        <dbReference type="ChEBI" id="CHEBI:46398"/>
        <dbReference type="ChEBI" id="CHEBI:57705"/>
        <dbReference type="ChEBI" id="CHEBI:57776"/>
        <dbReference type="EC" id="2.7.7.23"/>
    </reaction>
</comment>
<comment type="cofactor">
    <cofactor evidence="1">
        <name>Mg(2+)</name>
        <dbReference type="ChEBI" id="CHEBI:18420"/>
    </cofactor>
    <text evidence="1">Binds 1 Mg(2+) ion per subunit.</text>
</comment>
<comment type="pathway">
    <text evidence="1">Nucleotide-sugar biosynthesis; UDP-N-acetyl-alpha-D-glucosamine biosynthesis; N-acetyl-alpha-D-glucosamine 1-phosphate from alpha-D-glucosamine 6-phosphate (route II): step 2/2.</text>
</comment>
<comment type="pathway">
    <text evidence="1">Nucleotide-sugar biosynthesis; UDP-N-acetyl-alpha-D-glucosamine biosynthesis; UDP-N-acetyl-alpha-D-glucosamine from N-acetyl-alpha-D-glucosamine 1-phosphate: step 1/1.</text>
</comment>
<comment type="pathway">
    <text evidence="1">Bacterial outer membrane biogenesis; LPS lipid A biosynthesis.</text>
</comment>
<comment type="subunit">
    <text evidence="1">Homotrimer.</text>
</comment>
<comment type="subcellular location">
    <subcellularLocation>
        <location evidence="1">Cytoplasm</location>
    </subcellularLocation>
</comment>
<comment type="similarity">
    <text evidence="1">In the N-terminal section; belongs to the N-acetylglucosamine-1-phosphate uridyltransferase family.</text>
</comment>
<comment type="similarity">
    <text evidence="1">In the C-terminal section; belongs to the transferase hexapeptide repeat family.</text>
</comment>
<organism>
    <name type="scientific">Legionella pneumophila (strain Corby)</name>
    <dbReference type="NCBI Taxonomy" id="400673"/>
    <lineage>
        <taxon>Bacteria</taxon>
        <taxon>Pseudomonadati</taxon>
        <taxon>Pseudomonadota</taxon>
        <taxon>Gammaproteobacteria</taxon>
        <taxon>Legionellales</taxon>
        <taxon>Legionellaceae</taxon>
        <taxon>Legionella</taxon>
    </lineage>
</organism>
<dbReference type="EC" id="2.7.7.23" evidence="1"/>
<dbReference type="EC" id="2.3.1.157" evidence="1"/>
<dbReference type="EMBL" id="CP000675">
    <property type="protein sequence ID" value="ABQ57048.1"/>
    <property type="molecule type" value="Genomic_DNA"/>
</dbReference>
<dbReference type="RefSeq" id="WP_011947754.1">
    <property type="nucleotide sequence ID" value="NZ_JAPMSS010000004.1"/>
</dbReference>
<dbReference type="SMR" id="A5II48"/>
<dbReference type="KEGG" id="lpc:LPC_3161"/>
<dbReference type="HOGENOM" id="CLU_029499_15_2_6"/>
<dbReference type="UniPathway" id="UPA00113">
    <property type="reaction ID" value="UER00532"/>
</dbReference>
<dbReference type="UniPathway" id="UPA00113">
    <property type="reaction ID" value="UER00533"/>
</dbReference>
<dbReference type="UniPathway" id="UPA00973"/>
<dbReference type="GO" id="GO:0005737">
    <property type="term" value="C:cytoplasm"/>
    <property type="evidence" value="ECO:0007669"/>
    <property type="project" value="UniProtKB-SubCell"/>
</dbReference>
<dbReference type="GO" id="GO:0016020">
    <property type="term" value="C:membrane"/>
    <property type="evidence" value="ECO:0007669"/>
    <property type="project" value="GOC"/>
</dbReference>
<dbReference type="GO" id="GO:0019134">
    <property type="term" value="F:glucosamine-1-phosphate N-acetyltransferase activity"/>
    <property type="evidence" value="ECO:0007669"/>
    <property type="project" value="UniProtKB-UniRule"/>
</dbReference>
<dbReference type="GO" id="GO:0000287">
    <property type="term" value="F:magnesium ion binding"/>
    <property type="evidence" value="ECO:0007669"/>
    <property type="project" value="UniProtKB-UniRule"/>
</dbReference>
<dbReference type="GO" id="GO:0003977">
    <property type="term" value="F:UDP-N-acetylglucosamine diphosphorylase activity"/>
    <property type="evidence" value="ECO:0007669"/>
    <property type="project" value="UniProtKB-UniRule"/>
</dbReference>
<dbReference type="GO" id="GO:0000902">
    <property type="term" value="P:cell morphogenesis"/>
    <property type="evidence" value="ECO:0007669"/>
    <property type="project" value="UniProtKB-UniRule"/>
</dbReference>
<dbReference type="GO" id="GO:0071555">
    <property type="term" value="P:cell wall organization"/>
    <property type="evidence" value="ECO:0007669"/>
    <property type="project" value="UniProtKB-KW"/>
</dbReference>
<dbReference type="GO" id="GO:0009245">
    <property type="term" value="P:lipid A biosynthetic process"/>
    <property type="evidence" value="ECO:0007669"/>
    <property type="project" value="UniProtKB-UniRule"/>
</dbReference>
<dbReference type="GO" id="GO:0009252">
    <property type="term" value="P:peptidoglycan biosynthetic process"/>
    <property type="evidence" value="ECO:0007669"/>
    <property type="project" value="UniProtKB-UniRule"/>
</dbReference>
<dbReference type="GO" id="GO:0008360">
    <property type="term" value="P:regulation of cell shape"/>
    <property type="evidence" value="ECO:0007669"/>
    <property type="project" value="UniProtKB-KW"/>
</dbReference>
<dbReference type="GO" id="GO:0006048">
    <property type="term" value="P:UDP-N-acetylglucosamine biosynthetic process"/>
    <property type="evidence" value="ECO:0007669"/>
    <property type="project" value="UniProtKB-UniPathway"/>
</dbReference>
<dbReference type="CDD" id="cd02540">
    <property type="entry name" value="GT2_GlmU_N_bac"/>
    <property type="match status" value="1"/>
</dbReference>
<dbReference type="CDD" id="cd03353">
    <property type="entry name" value="LbH_GlmU_C"/>
    <property type="match status" value="1"/>
</dbReference>
<dbReference type="Gene3D" id="2.160.10.10">
    <property type="entry name" value="Hexapeptide repeat proteins"/>
    <property type="match status" value="1"/>
</dbReference>
<dbReference type="Gene3D" id="3.90.550.10">
    <property type="entry name" value="Spore Coat Polysaccharide Biosynthesis Protein SpsA, Chain A"/>
    <property type="match status" value="1"/>
</dbReference>
<dbReference type="HAMAP" id="MF_01631">
    <property type="entry name" value="GlmU"/>
    <property type="match status" value="1"/>
</dbReference>
<dbReference type="InterPro" id="IPR005882">
    <property type="entry name" value="Bifunctional_GlmU"/>
</dbReference>
<dbReference type="InterPro" id="IPR050065">
    <property type="entry name" value="GlmU-like"/>
</dbReference>
<dbReference type="InterPro" id="IPR038009">
    <property type="entry name" value="GlmU_C_LbH"/>
</dbReference>
<dbReference type="InterPro" id="IPR001451">
    <property type="entry name" value="Hexapep"/>
</dbReference>
<dbReference type="InterPro" id="IPR018357">
    <property type="entry name" value="Hexapep_transf_CS"/>
</dbReference>
<dbReference type="InterPro" id="IPR025877">
    <property type="entry name" value="MobA-like_NTP_Trfase"/>
</dbReference>
<dbReference type="InterPro" id="IPR029044">
    <property type="entry name" value="Nucleotide-diphossugar_trans"/>
</dbReference>
<dbReference type="InterPro" id="IPR011004">
    <property type="entry name" value="Trimer_LpxA-like_sf"/>
</dbReference>
<dbReference type="NCBIfam" id="TIGR01173">
    <property type="entry name" value="glmU"/>
    <property type="match status" value="1"/>
</dbReference>
<dbReference type="PANTHER" id="PTHR43584:SF3">
    <property type="entry name" value="BIFUNCTIONAL PROTEIN GLMU"/>
    <property type="match status" value="1"/>
</dbReference>
<dbReference type="PANTHER" id="PTHR43584">
    <property type="entry name" value="NUCLEOTIDYL TRANSFERASE"/>
    <property type="match status" value="1"/>
</dbReference>
<dbReference type="Pfam" id="PF00132">
    <property type="entry name" value="Hexapep"/>
    <property type="match status" value="2"/>
</dbReference>
<dbReference type="Pfam" id="PF12804">
    <property type="entry name" value="NTP_transf_3"/>
    <property type="match status" value="1"/>
</dbReference>
<dbReference type="SUPFAM" id="SSF53448">
    <property type="entry name" value="Nucleotide-diphospho-sugar transferases"/>
    <property type="match status" value="1"/>
</dbReference>
<dbReference type="SUPFAM" id="SSF51161">
    <property type="entry name" value="Trimeric LpxA-like enzymes"/>
    <property type="match status" value="1"/>
</dbReference>
<dbReference type="PROSITE" id="PS00101">
    <property type="entry name" value="HEXAPEP_TRANSFERASES"/>
    <property type="match status" value="1"/>
</dbReference>
<name>GLMU_LEGPC</name>
<accession>A5II48</accession>
<protein>
    <recommendedName>
        <fullName evidence="1">Bifunctional protein GlmU</fullName>
    </recommendedName>
    <domain>
        <recommendedName>
            <fullName evidence="1">UDP-N-acetylglucosamine pyrophosphorylase</fullName>
            <ecNumber evidence="1">2.7.7.23</ecNumber>
        </recommendedName>
        <alternativeName>
            <fullName evidence="1">N-acetylglucosamine-1-phosphate uridyltransferase</fullName>
        </alternativeName>
    </domain>
    <domain>
        <recommendedName>
            <fullName evidence="1">Glucosamine-1-phosphate N-acetyltransferase</fullName>
            <ecNumber evidence="1">2.3.1.157</ecNumber>
        </recommendedName>
    </domain>
</protein>
<proteinExistence type="inferred from homology"/>
<sequence length="461" mass="50279">MNLQIIILAAGQGKRMYSDTPKVLHHLAGKPLLTHVVETAQQLNPDAIHVIYGHGGEQIKSSLPNLPVHWVHQAEQLGTGHAVLQAMPHIPDDAYVLVLSADVPLIQVGTLQSLIECSQRQNPDHSVLALLVAELENPSGLGRIIRNNQGEIYSIVEEKDANEQVKNIKEIYSGVCCTLANNLKKWLPQLSNSNAQGEYYLTEIISLAVQNKTPITSLTAKNSFEVQGINNRQQLQQLERIWQQRAANQLMEKGATLADANRFDLRGELYCGKDVYIDINCIFTGTVVLGNGCKIGPNCSLTNVTLGDGCEVYANSVLEGCHIANDCHIGPFARLRSGTQLASHCKIGNFVETKKAIFDEGTKASHLSYLGDVLLGKNVNVGAGTITCNYDGVNKHQTIIEDGVFIGSDTQLVAPVTVGANATIGAGSTIRRNVPPDELTLTESRQKTIYGWKRPVKRERD</sequence>
<keyword id="KW-0012">Acyltransferase</keyword>
<keyword id="KW-0133">Cell shape</keyword>
<keyword id="KW-0961">Cell wall biogenesis/degradation</keyword>
<keyword id="KW-0963">Cytoplasm</keyword>
<keyword id="KW-0460">Magnesium</keyword>
<keyword id="KW-0479">Metal-binding</keyword>
<keyword id="KW-0511">Multifunctional enzyme</keyword>
<keyword id="KW-0548">Nucleotidyltransferase</keyword>
<keyword id="KW-0573">Peptidoglycan synthesis</keyword>
<keyword id="KW-0677">Repeat</keyword>
<keyword id="KW-0808">Transferase</keyword>
<gene>
    <name evidence="1" type="primary">glmU</name>
    <name type="ordered locus">LPC_3161</name>
</gene>
<evidence type="ECO:0000255" key="1">
    <source>
        <dbReference type="HAMAP-Rule" id="MF_01631"/>
    </source>
</evidence>